<reference key="1">
    <citation type="submission" date="2000-08" db="EMBL/GenBank/DDBJ databases">
        <title>Cloning and characterizing a multicopper oxidase gene from Candida glabrata.</title>
        <authorList>
            <person name="Tatsuno K."/>
        </authorList>
    </citation>
    <scope>NUCLEOTIDE SEQUENCE [GENOMIC DNA]</scope>
    <source>
        <strain>cg1012</strain>
    </source>
</reference>
<reference key="2">
    <citation type="journal article" date="2004" name="Nature">
        <title>Genome evolution in yeasts.</title>
        <authorList>
            <person name="Dujon B."/>
            <person name="Sherman D."/>
            <person name="Fischer G."/>
            <person name="Durrens P."/>
            <person name="Casaregola S."/>
            <person name="Lafontaine I."/>
            <person name="de Montigny J."/>
            <person name="Marck C."/>
            <person name="Neuveglise C."/>
            <person name="Talla E."/>
            <person name="Goffard N."/>
            <person name="Frangeul L."/>
            <person name="Aigle M."/>
            <person name="Anthouard V."/>
            <person name="Babour A."/>
            <person name="Barbe V."/>
            <person name="Barnay S."/>
            <person name="Blanchin S."/>
            <person name="Beckerich J.-M."/>
            <person name="Beyne E."/>
            <person name="Bleykasten C."/>
            <person name="Boisrame A."/>
            <person name="Boyer J."/>
            <person name="Cattolico L."/>
            <person name="Confanioleri F."/>
            <person name="de Daruvar A."/>
            <person name="Despons L."/>
            <person name="Fabre E."/>
            <person name="Fairhead C."/>
            <person name="Ferry-Dumazet H."/>
            <person name="Groppi A."/>
            <person name="Hantraye F."/>
            <person name="Hennequin C."/>
            <person name="Jauniaux N."/>
            <person name="Joyet P."/>
            <person name="Kachouri R."/>
            <person name="Kerrest A."/>
            <person name="Koszul R."/>
            <person name="Lemaire M."/>
            <person name="Lesur I."/>
            <person name="Ma L."/>
            <person name="Muller H."/>
            <person name="Nicaud J.-M."/>
            <person name="Nikolski M."/>
            <person name="Oztas S."/>
            <person name="Ozier-Kalogeropoulos O."/>
            <person name="Pellenz S."/>
            <person name="Potier S."/>
            <person name="Richard G.-F."/>
            <person name="Straub M.-L."/>
            <person name="Suleau A."/>
            <person name="Swennen D."/>
            <person name="Tekaia F."/>
            <person name="Wesolowski-Louvel M."/>
            <person name="Westhof E."/>
            <person name="Wirth B."/>
            <person name="Zeniou-Meyer M."/>
            <person name="Zivanovic Y."/>
            <person name="Bolotin-Fukuhara M."/>
            <person name="Thierry A."/>
            <person name="Bouchier C."/>
            <person name="Caudron B."/>
            <person name="Scarpelli C."/>
            <person name="Gaillardin C."/>
            <person name="Weissenbach J."/>
            <person name="Wincker P."/>
            <person name="Souciet J.-L."/>
        </authorList>
    </citation>
    <scope>NUCLEOTIDE SEQUENCE [LARGE SCALE GENOMIC DNA]</scope>
    <source>
        <strain>ATCC 2001 / BCRC 20586 / JCM 3761 / NBRC 0622 / NRRL Y-65 / CBS 138</strain>
    </source>
</reference>
<organism>
    <name type="scientific">Candida glabrata (strain ATCC 2001 / BCRC 20586 / JCM 3761 / NBRC 0622 / NRRL Y-65 / CBS 138)</name>
    <name type="common">Yeast</name>
    <name type="synonym">Nakaseomyces glabratus</name>
    <dbReference type="NCBI Taxonomy" id="284593"/>
    <lineage>
        <taxon>Eukaryota</taxon>
        <taxon>Fungi</taxon>
        <taxon>Dikarya</taxon>
        <taxon>Ascomycota</taxon>
        <taxon>Saccharomycotina</taxon>
        <taxon>Saccharomycetes</taxon>
        <taxon>Saccharomycetales</taxon>
        <taxon>Saccharomycetaceae</taxon>
        <taxon>Nakaseomyces</taxon>
    </lineage>
</organism>
<feature type="signal peptide" evidence="2">
    <location>
        <begin position="1"/>
        <end position="17"/>
    </location>
</feature>
<feature type="chain" id="PRO_0000002957" description="Iron transport multicopper oxidase FET3">
    <location>
        <begin position="18"/>
        <end position="635"/>
    </location>
</feature>
<feature type="topological domain" description="Extracellular" evidence="2">
    <location>
        <begin position="18"/>
        <end position="559"/>
    </location>
</feature>
<feature type="transmembrane region" description="Helical" evidence="2">
    <location>
        <begin position="560"/>
        <end position="580"/>
    </location>
</feature>
<feature type="topological domain" description="Cytoplasmic" evidence="2">
    <location>
        <begin position="581"/>
        <end position="628"/>
    </location>
</feature>
<feature type="domain" description="Plastocyanin-like 1">
    <location>
        <begin position="42"/>
        <end position="140"/>
    </location>
</feature>
<feature type="domain" description="Plastocyanin-like 2">
    <location>
        <begin position="190"/>
        <end position="292"/>
    </location>
</feature>
<feature type="domain" description="Plastocyanin-like 3">
    <location>
        <begin position="382"/>
        <end position="501"/>
    </location>
</feature>
<feature type="binding site" description="type 2 copper site" evidence="1">
    <location>
        <position position="77"/>
    </location>
    <ligand>
        <name>Cu cation</name>
        <dbReference type="ChEBI" id="CHEBI:23378"/>
        <label>1</label>
    </ligand>
</feature>
<feature type="binding site" description="type 3 copper site" evidence="1">
    <location>
        <position position="79"/>
    </location>
    <ligand>
        <name>Cu cation</name>
        <dbReference type="ChEBI" id="CHEBI:23378"/>
        <label>2</label>
    </ligand>
</feature>
<feature type="binding site" description="type 3 copper site" evidence="1">
    <location>
        <position position="122"/>
    </location>
    <ligand>
        <name>Cu cation</name>
        <dbReference type="ChEBI" id="CHEBI:23378"/>
        <label>2</label>
    </ligand>
</feature>
<feature type="binding site" description="type 3 copper site" evidence="1">
    <location>
        <position position="124"/>
    </location>
    <ligand>
        <name>Cu cation</name>
        <dbReference type="ChEBI" id="CHEBI:23378"/>
        <label>3</label>
    </ligand>
</feature>
<feature type="binding site" description="type 1 copper site" evidence="1">
    <location>
        <position position="413"/>
    </location>
    <ligand>
        <name>Cu cation</name>
        <dbReference type="ChEBI" id="CHEBI:23378"/>
        <label>4</label>
    </ligand>
</feature>
<feature type="binding site" description="type 2 copper site" evidence="1">
    <location>
        <position position="416"/>
    </location>
    <ligand>
        <name>Cu cation</name>
        <dbReference type="ChEBI" id="CHEBI:23378"/>
        <label>1</label>
    </ligand>
</feature>
<feature type="binding site" description="type 3 copper site" evidence="1">
    <location>
        <position position="418"/>
    </location>
    <ligand>
        <name>Cu cation</name>
        <dbReference type="ChEBI" id="CHEBI:23378"/>
        <label>3</label>
    </ligand>
</feature>
<feature type="binding site" description="type 3 copper site" evidence="1">
    <location>
        <position position="483"/>
    </location>
    <ligand>
        <name>Cu cation</name>
        <dbReference type="ChEBI" id="CHEBI:23378"/>
        <label>3</label>
    </ligand>
</feature>
<feature type="binding site" description="type 1 copper site" evidence="1">
    <location>
        <position position="484"/>
    </location>
    <ligand>
        <name>Cu cation</name>
        <dbReference type="ChEBI" id="CHEBI:23378"/>
        <label>4</label>
    </ligand>
</feature>
<feature type="binding site" description="type 3 copper site" evidence="1">
    <location>
        <position position="485"/>
    </location>
    <ligand>
        <name>Cu cation</name>
        <dbReference type="ChEBI" id="CHEBI:23378"/>
        <label>2</label>
    </ligand>
</feature>
<feature type="binding site" description="type 1 copper site" evidence="1">
    <location>
        <position position="489"/>
    </location>
    <ligand>
        <name>Cu cation</name>
        <dbReference type="ChEBI" id="CHEBI:23378"/>
        <label>4</label>
    </ligand>
</feature>
<feature type="glycosylation site" description="N-linked (GlcNAc...) asparagine" evidence="2">
    <location>
        <position position="70"/>
    </location>
</feature>
<feature type="glycosylation site" description="N-linked (GlcNAc...) asparagine" evidence="2">
    <location>
        <position position="73"/>
    </location>
</feature>
<feature type="glycosylation site" description="N-linked (GlcNAc...) asparagine" evidence="2">
    <location>
        <position position="109"/>
    </location>
</feature>
<feature type="glycosylation site" description="N-linked (GlcNAc...) asparagine" evidence="2">
    <location>
        <position position="194"/>
    </location>
</feature>
<feature type="glycosylation site" description="N-linked (GlcNAc...) asparagine" evidence="2">
    <location>
        <position position="198"/>
    </location>
</feature>
<feature type="glycosylation site" description="N-linked (GlcNAc...) asparagine" evidence="2">
    <location>
        <position position="244"/>
    </location>
</feature>
<feature type="glycosylation site" description="N-linked (GlcNAc...) asparagine" evidence="2">
    <location>
        <position position="265"/>
    </location>
</feature>
<feature type="glycosylation site" description="N-linked (GlcNAc...) asparagine" evidence="2">
    <location>
        <position position="292"/>
    </location>
</feature>
<feature type="glycosylation site" description="N-linked (GlcNAc...) asparagine" evidence="2">
    <location>
        <position position="359"/>
    </location>
</feature>
<feature type="glycosylation site" description="N-linked (GlcNAc...) asparagine" evidence="2">
    <location>
        <position position="443"/>
    </location>
</feature>
<feature type="glycosylation site" description="N-linked (GlcNAc...) asparagine" evidence="2">
    <location>
        <position position="535"/>
    </location>
</feature>
<gene>
    <name type="primary">FET3</name>
    <name type="ordered locus">CAGL0F06413g</name>
</gene>
<protein>
    <recommendedName>
        <fullName>Iron transport multicopper oxidase FET3</fullName>
        <ecNumber>1.-.-.-</ecNumber>
    </recommendedName>
</protein>
<accession>Q96WT3</accession>
<accession>Q6FU48</accession>
<dbReference type="EC" id="1.-.-.-"/>
<dbReference type="EMBL" id="AB047078">
    <property type="protein sequence ID" value="BAB62813.1"/>
    <property type="molecule type" value="Genomic_DNA"/>
</dbReference>
<dbReference type="EMBL" id="CR380952">
    <property type="protein sequence ID" value="CAG59170.1"/>
    <property type="molecule type" value="Genomic_DNA"/>
</dbReference>
<dbReference type="RefSeq" id="XP_446246.1">
    <property type="nucleotide sequence ID" value="XM_446246.1"/>
</dbReference>
<dbReference type="SMR" id="Q96WT3"/>
<dbReference type="FunCoup" id="Q96WT3">
    <property type="interactions" value="788"/>
</dbReference>
<dbReference type="STRING" id="284593.Q96WT3"/>
<dbReference type="GlyCosmos" id="Q96WT3">
    <property type="glycosylation" value="11 sites, No reported glycans"/>
</dbReference>
<dbReference type="EnsemblFungi" id="CAGL0F06413g-T">
    <property type="protein sequence ID" value="CAGL0F06413g-T-p1"/>
    <property type="gene ID" value="CAGL0F06413g"/>
</dbReference>
<dbReference type="GeneID" id="2887784"/>
<dbReference type="KEGG" id="cgr:2887784"/>
<dbReference type="CGD" id="CAL0131028">
    <property type="gene designation" value="FET3"/>
</dbReference>
<dbReference type="VEuPathDB" id="FungiDB:CAGL0F06413g"/>
<dbReference type="eggNOG" id="KOG1263">
    <property type="taxonomic scope" value="Eukaryota"/>
</dbReference>
<dbReference type="HOGENOM" id="CLU_006504_7_3_1"/>
<dbReference type="InParanoid" id="Q96WT3"/>
<dbReference type="OMA" id="CDIAPGS"/>
<dbReference type="Proteomes" id="UP000002428">
    <property type="component" value="Chromosome F"/>
</dbReference>
<dbReference type="GO" id="GO:0005576">
    <property type="term" value="C:extracellular region"/>
    <property type="evidence" value="ECO:0000314"/>
    <property type="project" value="CGD"/>
</dbReference>
<dbReference type="GO" id="GO:0062040">
    <property type="term" value="C:fungal biofilm matrix"/>
    <property type="evidence" value="ECO:0000314"/>
    <property type="project" value="CGD"/>
</dbReference>
<dbReference type="GO" id="GO:0033573">
    <property type="term" value="C:high-affinity iron permease complex"/>
    <property type="evidence" value="ECO:0007669"/>
    <property type="project" value="EnsemblFungi"/>
</dbReference>
<dbReference type="GO" id="GO:0005507">
    <property type="term" value="F:copper ion binding"/>
    <property type="evidence" value="ECO:0007669"/>
    <property type="project" value="InterPro"/>
</dbReference>
<dbReference type="GO" id="GO:0004322">
    <property type="term" value="F:ferroxidase activity"/>
    <property type="evidence" value="ECO:0007669"/>
    <property type="project" value="EnsemblFungi"/>
</dbReference>
<dbReference type="GO" id="GO:0005381">
    <property type="term" value="F:iron ion transmembrane transporter activity"/>
    <property type="evidence" value="ECO:0007669"/>
    <property type="project" value="EnsemblFungi"/>
</dbReference>
<dbReference type="GO" id="GO:1901684">
    <property type="term" value="P:arsenate ion transmembrane transport"/>
    <property type="evidence" value="ECO:0007669"/>
    <property type="project" value="EnsemblFungi"/>
</dbReference>
<dbReference type="GO" id="GO:0010106">
    <property type="term" value="P:cellular response to iron ion starvation"/>
    <property type="evidence" value="ECO:0007669"/>
    <property type="project" value="TreeGrafter"/>
</dbReference>
<dbReference type="GO" id="GO:0006878">
    <property type="term" value="P:intracellular copper ion homeostasis"/>
    <property type="evidence" value="ECO:0007669"/>
    <property type="project" value="EnsemblFungi"/>
</dbReference>
<dbReference type="GO" id="GO:0033215">
    <property type="term" value="P:reductive iron assimilation"/>
    <property type="evidence" value="ECO:0007669"/>
    <property type="project" value="EnsemblFungi"/>
</dbReference>
<dbReference type="GO" id="GO:0046688">
    <property type="term" value="P:response to copper ion"/>
    <property type="evidence" value="ECO:0007669"/>
    <property type="project" value="EnsemblFungi"/>
</dbReference>
<dbReference type="CDD" id="cd13851">
    <property type="entry name" value="CuRO_1_Fet3p"/>
    <property type="match status" value="1"/>
</dbReference>
<dbReference type="CDD" id="cd13877">
    <property type="entry name" value="CuRO_2_Fet3p_like"/>
    <property type="match status" value="1"/>
</dbReference>
<dbReference type="CDD" id="cd13899">
    <property type="entry name" value="CuRO_3_Fet3p"/>
    <property type="match status" value="1"/>
</dbReference>
<dbReference type="FunFam" id="2.60.40.420:FF:000022">
    <property type="entry name" value="FET5p Multicopper oxidase"/>
    <property type="match status" value="1"/>
</dbReference>
<dbReference type="FunFam" id="2.60.40.420:FF:000024">
    <property type="entry name" value="FET5p Multicopper oxidase"/>
    <property type="match status" value="1"/>
</dbReference>
<dbReference type="FunFam" id="2.60.40.420:FF:000025">
    <property type="entry name" value="FET5p Multicopper oxidase"/>
    <property type="match status" value="1"/>
</dbReference>
<dbReference type="Gene3D" id="2.60.40.420">
    <property type="entry name" value="Cupredoxins - blue copper proteins"/>
    <property type="match status" value="3"/>
</dbReference>
<dbReference type="InterPro" id="IPR011707">
    <property type="entry name" value="Cu-oxidase-like_N"/>
</dbReference>
<dbReference type="InterPro" id="IPR001117">
    <property type="entry name" value="Cu-oxidase_2nd"/>
</dbReference>
<dbReference type="InterPro" id="IPR011706">
    <property type="entry name" value="Cu-oxidase_C"/>
</dbReference>
<dbReference type="InterPro" id="IPR045087">
    <property type="entry name" value="Cu-oxidase_fam"/>
</dbReference>
<dbReference type="InterPro" id="IPR033138">
    <property type="entry name" value="Cu_oxidase_CS"/>
</dbReference>
<dbReference type="InterPro" id="IPR002355">
    <property type="entry name" value="Cu_oxidase_Cu_BS"/>
</dbReference>
<dbReference type="InterPro" id="IPR008972">
    <property type="entry name" value="Cupredoxin"/>
</dbReference>
<dbReference type="InterPro" id="IPR044130">
    <property type="entry name" value="CuRO_2_Fet3-like"/>
</dbReference>
<dbReference type="PANTHER" id="PTHR11709:SF361">
    <property type="entry name" value="IRON TRANSPORT MULTICOPPER OXIDASE FET3"/>
    <property type="match status" value="1"/>
</dbReference>
<dbReference type="PANTHER" id="PTHR11709">
    <property type="entry name" value="MULTI-COPPER OXIDASE"/>
    <property type="match status" value="1"/>
</dbReference>
<dbReference type="Pfam" id="PF00394">
    <property type="entry name" value="Cu-oxidase"/>
    <property type="match status" value="1"/>
</dbReference>
<dbReference type="Pfam" id="PF07731">
    <property type="entry name" value="Cu-oxidase_2"/>
    <property type="match status" value="1"/>
</dbReference>
<dbReference type="Pfam" id="PF07732">
    <property type="entry name" value="Cu-oxidase_3"/>
    <property type="match status" value="1"/>
</dbReference>
<dbReference type="SUPFAM" id="SSF49503">
    <property type="entry name" value="Cupredoxins"/>
    <property type="match status" value="3"/>
</dbReference>
<dbReference type="PROSITE" id="PS00079">
    <property type="entry name" value="MULTICOPPER_OXIDASE1"/>
    <property type="match status" value="2"/>
</dbReference>
<dbReference type="PROSITE" id="PS00080">
    <property type="entry name" value="MULTICOPPER_OXIDASE2"/>
    <property type="match status" value="1"/>
</dbReference>
<keyword id="KW-1003">Cell membrane</keyword>
<keyword id="KW-0186">Copper</keyword>
<keyword id="KW-0325">Glycoprotein</keyword>
<keyword id="KW-0406">Ion transport</keyword>
<keyword id="KW-0408">Iron</keyword>
<keyword id="KW-0410">Iron transport</keyword>
<keyword id="KW-0472">Membrane</keyword>
<keyword id="KW-0479">Metal-binding</keyword>
<keyword id="KW-0560">Oxidoreductase</keyword>
<keyword id="KW-1185">Reference proteome</keyword>
<keyword id="KW-0677">Repeat</keyword>
<keyword id="KW-0732">Signal</keyword>
<keyword id="KW-0812">Transmembrane</keyword>
<keyword id="KW-1133">Transmembrane helix</keyword>
<keyword id="KW-0813">Transport</keyword>
<comment type="function">
    <text evidence="1">Iron transport multicopper ferroxidase required for Fe(2+) high affinity uptake. Required to oxidize Fe(2+) and release it from the transporter. Essential component of copper-dependent iron transport (By similarity).</text>
</comment>
<comment type="cofactor">
    <cofactor evidence="1">
        <name>Cu cation</name>
        <dbReference type="ChEBI" id="CHEBI:23378"/>
    </cofactor>
    <text evidence="1">Binds 4 Cu cations per monomer.</text>
</comment>
<comment type="subcellular location">
    <subcellularLocation>
        <location evidence="3">Cell membrane</location>
        <topology evidence="3">Single-pass type I membrane protein</topology>
        <orientation evidence="3">Extracellular side</orientation>
    </subcellularLocation>
</comment>
<comment type="similarity">
    <text evidence="3">Belongs to the multicopper oxidase family.</text>
</comment>
<evidence type="ECO:0000250" key="1"/>
<evidence type="ECO:0000255" key="2"/>
<evidence type="ECO:0000305" key="3"/>
<name>FET3_CANGA</name>
<proteinExistence type="inferred from homology"/>
<sequence>MMVPLLLSTYFITAVYGATHTFHWTTGWGNRNVDGIKERPVITCNGEYPWPDVRVAKGDRIEVYLTNGFNNTNTSLHFHGMFQRGTNQMDGVPYLTQCPIGPGDTMLYNFTVDENVGTYWYHSHTDGQYEDGMRGLFVIEDGENNKNFPYEYDEDVMLSIGEWYDTTVDVLTRKFLNLNNPTGAEPIPQNLILNNTMNLTWEVQPDTTYLLRIVNVGGFVSQYFWIEDHEMEVVEVDGVYVEKNTTNMLYITVAQRYAVLVHTKNDTSKNFAIMQKFDDTMLDVIPKDLQLNATSYLVYDKSKPMPEQNYVDSIDDYLDDFYLVPMDKEELYPEADHVITIDVIMDNLINGVNYAFFNNITYTTPKVPTLLTVLSAGQDALNPFIYGTNTNTFVLKKGEVVDLIVNNQDTGKHPFHLHGHVFQTILRDREFDDAKGEKPHSFNDSDHAAYPSIPMKRDTVYLNPQSNMVLRFKADNPGVWFFHCHIEWHLLQGLAVVMVEDPISIQNTASQHLTANGLQVCGNVKVPTQGNAAANDSDFFNLEGQNVQHKSIPTGFTKKGIIAMTFSCLAGVLGITMIAIYGFSEIPEPEIKVMRNLHLNPEDVLEKTSSSSVISASNSSSLEDSRNQKKKFIFF</sequence>